<comment type="similarity">
    <text evidence="1">Belongs to the bacterial ribosomal protein bL35 family.</text>
</comment>
<evidence type="ECO:0000255" key="1">
    <source>
        <dbReference type="HAMAP-Rule" id="MF_00514"/>
    </source>
</evidence>
<evidence type="ECO:0000256" key="2">
    <source>
        <dbReference type="SAM" id="MobiDB-lite"/>
    </source>
</evidence>
<evidence type="ECO:0000305" key="3"/>
<proteinExistence type="inferred from homology"/>
<accession>Q3B6M0</accession>
<name>RL35_CHLL3</name>
<organism>
    <name type="scientific">Chlorobium luteolum (strain DSM 273 / BCRC 81028 / 2530)</name>
    <name type="common">Pelodictyon luteolum</name>
    <dbReference type="NCBI Taxonomy" id="319225"/>
    <lineage>
        <taxon>Bacteria</taxon>
        <taxon>Pseudomonadati</taxon>
        <taxon>Chlorobiota</taxon>
        <taxon>Chlorobiia</taxon>
        <taxon>Chlorobiales</taxon>
        <taxon>Chlorobiaceae</taxon>
        <taxon>Chlorobium/Pelodictyon group</taxon>
        <taxon>Pelodictyon</taxon>
    </lineage>
</organism>
<dbReference type="EMBL" id="CP000096">
    <property type="protein sequence ID" value="ABB23011.1"/>
    <property type="molecule type" value="Genomic_DNA"/>
</dbReference>
<dbReference type="RefSeq" id="WP_011356887.1">
    <property type="nucleotide sequence ID" value="NC_007512.1"/>
</dbReference>
<dbReference type="SMR" id="Q3B6M0"/>
<dbReference type="STRING" id="319225.Plut_0121"/>
<dbReference type="KEGG" id="plt:Plut_0121"/>
<dbReference type="eggNOG" id="COG0291">
    <property type="taxonomic scope" value="Bacteria"/>
</dbReference>
<dbReference type="HOGENOM" id="CLU_169643_4_3_10"/>
<dbReference type="OrthoDB" id="47476at2"/>
<dbReference type="Proteomes" id="UP000002709">
    <property type="component" value="Chromosome"/>
</dbReference>
<dbReference type="GO" id="GO:0022625">
    <property type="term" value="C:cytosolic large ribosomal subunit"/>
    <property type="evidence" value="ECO:0007669"/>
    <property type="project" value="TreeGrafter"/>
</dbReference>
<dbReference type="GO" id="GO:0003735">
    <property type="term" value="F:structural constituent of ribosome"/>
    <property type="evidence" value="ECO:0007669"/>
    <property type="project" value="InterPro"/>
</dbReference>
<dbReference type="GO" id="GO:0006412">
    <property type="term" value="P:translation"/>
    <property type="evidence" value="ECO:0007669"/>
    <property type="project" value="UniProtKB-UniRule"/>
</dbReference>
<dbReference type="FunFam" id="4.10.410.60:FF:000001">
    <property type="entry name" value="50S ribosomal protein L35"/>
    <property type="match status" value="1"/>
</dbReference>
<dbReference type="Gene3D" id="4.10.410.60">
    <property type="match status" value="1"/>
</dbReference>
<dbReference type="HAMAP" id="MF_00514">
    <property type="entry name" value="Ribosomal_bL35"/>
    <property type="match status" value="1"/>
</dbReference>
<dbReference type="InterPro" id="IPR001706">
    <property type="entry name" value="Ribosomal_bL35"/>
</dbReference>
<dbReference type="InterPro" id="IPR021137">
    <property type="entry name" value="Ribosomal_bL35-like"/>
</dbReference>
<dbReference type="InterPro" id="IPR018265">
    <property type="entry name" value="Ribosomal_bL35_CS"/>
</dbReference>
<dbReference type="InterPro" id="IPR037229">
    <property type="entry name" value="Ribosomal_bL35_sf"/>
</dbReference>
<dbReference type="NCBIfam" id="TIGR00001">
    <property type="entry name" value="rpmI_bact"/>
    <property type="match status" value="1"/>
</dbReference>
<dbReference type="PANTHER" id="PTHR33343">
    <property type="entry name" value="54S RIBOSOMAL PROTEIN BL35M"/>
    <property type="match status" value="1"/>
</dbReference>
<dbReference type="PANTHER" id="PTHR33343:SF1">
    <property type="entry name" value="LARGE RIBOSOMAL SUBUNIT PROTEIN BL35M"/>
    <property type="match status" value="1"/>
</dbReference>
<dbReference type="Pfam" id="PF01632">
    <property type="entry name" value="Ribosomal_L35p"/>
    <property type="match status" value="1"/>
</dbReference>
<dbReference type="PRINTS" id="PR00064">
    <property type="entry name" value="RIBOSOMALL35"/>
</dbReference>
<dbReference type="SUPFAM" id="SSF143034">
    <property type="entry name" value="L35p-like"/>
    <property type="match status" value="1"/>
</dbReference>
<dbReference type="PROSITE" id="PS00936">
    <property type="entry name" value="RIBOSOMAL_L35"/>
    <property type="match status" value="1"/>
</dbReference>
<feature type="chain" id="PRO_0000258721" description="Large ribosomal subunit protein bL35">
    <location>
        <begin position="1"/>
        <end position="65"/>
    </location>
</feature>
<feature type="region of interest" description="Disordered" evidence="2">
    <location>
        <begin position="28"/>
        <end position="53"/>
    </location>
</feature>
<feature type="compositionally biased region" description="Basic residues" evidence="2">
    <location>
        <begin position="36"/>
        <end position="45"/>
    </location>
</feature>
<sequence length="65" mass="7663">MPKMKSHRGACKRFKATASGKIKRERMNGSHNLEKKNRKRTRRLHQSTMLDNATKEKQIKRMILA</sequence>
<reference key="1">
    <citation type="submission" date="2005-08" db="EMBL/GenBank/DDBJ databases">
        <title>Complete sequence of Pelodictyon luteolum DSM 273.</title>
        <authorList>
            <consortium name="US DOE Joint Genome Institute"/>
            <person name="Copeland A."/>
            <person name="Lucas S."/>
            <person name="Lapidus A."/>
            <person name="Barry K."/>
            <person name="Detter J.C."/>
            <person name="Glavina T."/>
            <person name="Hammon N."/>
            <person name="Israni S."/>
            <person name="Pitluck S."/>
            <person name="Bryant D."/>
            <person name="Schmutz J."/>
            <person name="Larimer F."/>
            <person name="Land M."/>
            <person name="Kyrpides N."/>
            <person name="Ivanova N."/>
            <person name="Richardson P."/>
        </authorList>
    </citation>
    <scope>NUCLEOTIDE SEQUENCE [LARGE SCALE GENOMIC DNA]</scope>
    <source>
        <strain>DSM 273 / BCRC 81028 / 2530</strain>
    </source>
</reference>
<keyword id="KW-1185">Reference proteome</keyword>
<keyword id="KW-0687">Ribonucleoprotein</keyword>
<keyword id="KW-0689">Ribosomal protein</keyword>
<gene>
    <name evidence="1" type="primary">rpmI</name>
    <name type="ordered locus">Plut_0121</name>
</gene>
<protein>
    <recommendedName>
        <fullName evidence="1">Large ribosomal subunit protein bL35</fullName>
    </recommendedName>
    <alternativeName>
        <fullName evidence="3">50S ribosomal protein L35</fullName>
    </alternativeName>
</protein>